<organism>
    <name type="scientific">Schizosaccharomyces pombe (strain 972 / ATCC 24843)</name>
    <name type="common">Fission yeast</name>
    <dbReference type="NCBI Taxonomy" id="284812"/>
    <lineage>
        <taxon>Eukaryota</taxon>
        <taxon>Fungi</taxon>
        <taxon>Dikarya</taxon>
        <taxon>Ascomycota</taxon>
        <taxon>Taphrinomycotina</taxon>
        <taxon>Schizosaccharomycetes</taxon>
        <taxon>Schizosaccharomycetales</taxon>
        <taxon>Schizosaccharomycetaceae</taxon>
        <taxon>Schizosaccharomyces</taxon>
    </lineage>
</organism>
<feature type="chain" id="PRO_0000140014" description="Ribonuclease P/MRP protein subunit POP5">
    <location>
        <begin position="1"/>
        <end position="139"/>
    </location>
</feature>
<evidence type="ECO:0000250" key="1"/>
<evidence type="ECO:0000305" key="2"/>
<dbReference type="EC" id="3.1.26.5"/>
<dbReference type="EMBL" id="CU329672">
    <property type="protein sequence ID" value="CAB52882.1"/>
    <property type="molecule type" value="Genomic_DNA"/>
</dbReference>
<dbReference type="PIR" id="T41635">
    <property type="entry name" value="T41635"/>
</dbReference>
<dbReference type="RefSeq" id="NP_588479.1">
    <property type="nucleotide sequence ID" value="NM_001023470.2"/>
</dbReference>
<dbReference type="SMR" id="Q9UU90"/>
<dbReference type="BioGRID" id="275473">
    <property type="interactions" value="4"/>
</dbReference>
<dbReference type="FunCoup" id="Q9UU90">
    <property type="interactions" value="167"/>
</dbReference>
<dbReference type="STRING" id="284812.Q9UU90"/>
<dbReference type="PaxDb" id="4896-SPCC830.09c.1"/>
<dbReference type="EnsemblFungi" id="SPCC830.09c.1">
    <property type="protein sequence ID" value="SPCC830.09c.1:pep"/>
    <property type="gene ID" value="SPCC830.09c"/>
</dbReference>
<dbReference type="PomBase" id="SPCC830.09c"/>
<dbReference type="VEuPathDB" id="FungiDB:SPCC830.09c"/>
<dbReference type="eggNOG" id="KOG4639">
    <property type="taxonomic scope" value="Eukaryota"/>
</dbReference>
<dbReference type="HOGENOM" id="CLU_086710_1_2_1"/>
<dbReference type="InParanoid" id="Q9UU90"/>
<dbReference type="OMA" id="MQNYLDK"/>
<dbReference type="PhylomeDB" id="Q9UU90"/>
<dbReference type="PRO" id="PR:Q9UU90"/>
<dbReference type="Proteomes" id="UP000002485">
    <property type="component" value="Chromosome III"/>
</dbReference>
<dbReference type="GO" id="GO:0030681">
    <property type="term" value="C:multimeric ribonuclease P complex"/>
    <property type="evidence" value="ECO:0000318"/>
    <property type="project" value="GO_Central"/>
</dbReference>
<dbReference type="GO" id="GO:0005655">
    <property type="term" value="C:nucleolar ribonuclease P complex"/>
    <property type="evidence" value="ECO:0000266"/>
    <property type="project" value="PomBase"/>
</dbReference>
<dbReference type="GO" id="GO:0005730">
    <property type="term" value="C:nucleolus"/>
    <property type="evidence" value="ECO:0000318"/>
    <property type="project" value="GO_Central"/>
</dbReference>
<dbReference type="GO" id="GO:0000172">
    <property type="term" value="C:ribonuclease MRP complex"/>
    <property type="evidence" value="ECO:0000269"/>
    <property type="project" value="PomBase"/>
</dbReference>
<dbReference type="GO" id="GO:0004526">
    <property type="term" value="F:ribonuclease P activity"/>
    <property type="evidence" value="ECO:0007669"/>
    <property type="project" value="UniProtKB-EC"/>
</dbReference>
<dbReference type="GO" id="GO:0033204">
    <property type="term" value="F:ribonuclease P RNA binding"/>
    <property type="evidence" value="ECO:0000318"/>
    <property type="project" value="GO_Central"/>
</dbReference>
<dbReference type="GO" id="GO:0000447">
    <property type="term" value="P:endonucleolytic cleavage in ITS1 to separate SSU-rRNA from 5.8S rRNA and LSU-rRNA from tricistronic rRNA transcript (SSU-rRNA, 5.8S rRNA, LSU-rRNA)"/>
    <property type="evidence" value="ECO:0000314"/>
    <property type="project" value="PomBase"/>
</dbReference>
<dbReference type="GO" id="GO:0001682">
    <property type="term" value="P:tRNA 5'-leader removal"/>
    <property type="evidence" value="ECO:0000318"/>
    <property type="project" value="GO_Central"/>
</dbReference>
<dbReference type="GO" id="GO:0008033">
    <property type="term" value="P:tRNA processing"/>
    <property type="evidence" value="ECO:0000314"/>
    <property type="project" value="PomBase"/>
</dbReference>
<dbReference type="FunFam" id="3.30.70.3250:FF:000004">
    <property type="entry name" value="Ribonuclease P/MRP protein subunit POP5"/>
    <property type="match status" value="1"/>
</dbReference>
<dbReference type="Gene3D" id="3.30.70.3250">
    <property type="entry name" value="Ribonuclease P, Pop5 subunit"/>
    <property type="match status" value="1"/>
</dbReference>
<dbReference type="HAMAP" id="MF_00755">
    <property type="entry name" value="RNase_P_2"/>
    <property type="match status" value="1"/>
</dbReference>
<dbReference type="InterPro" id="IPR002759">
    <property type="entry name" value="Pop5/Rpp14/Rnp2-like"/>
</dbReference>
<dbReference type="InterPro" id="IPR016819">
    <property type="entry name" value="RNase_P/MRP_POP5"/>
</dbReference>
<dbReference type="InterPro" id="IPR038085">
    <property type="entry name" value="Rnp2-like_sf"/>
</dbReference>
<dbReference type="PANTHER" id="PTHR15441">
    <property type="entry name" value="RIBONUCLEASE P PROTEIN SUBUNIT P14"/>
    <property type="match status" value="1"/>
</dbReference>
<dbReference type="PANTHER" id="PTHR15441:SF2">
    <property type="entry name" value="RIBONUCLEASE P_MRP PROTEIN SUBUNIT POP5"/>
    <property type="match status" value="1"/>
</dbReference>
<dbReference type="Pfam" id="PF01900">
    <property type="entry name" value="RNase_P_Rpp14"/>
    <property type="match status" value="1"/>
</dbReference>
<dbReference type="PIRSF" id="PIRSF023803">
    <property type="entry name" value="Ribonuclease_P_prd"/>
    <property type="match status" value="1"/>
</dbReference>
<dbReference type="SUPFAM" id="SSF160350">
    <property type="entry name" value="Rnp2-like"/>
    <property type="match status" value="1"/>
</dbReference>
<sequence>MVRFKSRYLLFEVLYPEAKEFFDYPTIPSDSSITTSSLSKIIRTMVAENFGDVGIGKVASSLTVKYFSPNTSTGILRVSRQHFRLAWAALVLIRELYGKPVIIRVVRVSGTIKKAELAAIERNKSEIHNISLMDEPIEV</sequence>
<accession>Q9UU90</accession>
<proteinExistence type="inferred from homology"/>
<comment type="function">
    <text evidence="1">Component of ribonuclease P, a protein complex that generates mature tRNA molecules by cleaving their 5'-ends. Also a component of RNase MRP, which cleaves pre-rRNA sequences (By similarity).</text>
</comment>
<comment type="catalytic activity">
    <reaction>
        <text>Endonucleolytic cleavage of RNA, removing 5'-extranucleotides from tRNA precursor.</text>
        <dbReference type="EC" id="3.1.26.5"/>
    </reaction>
</comment>
<comment type="subcellular location">
    <subcellularLocation>
        <location evidence="2">Nucleus</location>
    </subcellularLocation>
</comment>
<comment type="similarity">
    <text evidence="2">Belongs to the eukaryotic/archaeal RNase P protein component 2 family.</text>
</comment>
<reference key="1">
    <citation type="journal article" date="2002" name="Nature">
        <title>The genome sequence of Schizosaccharomyces pombe.</title>
        <authorList>
            <person name="Wood V."/>
            <person name="Gwilliam R."/>
            <person name="Rajandream M.A."/>
            <person name="Lyne M.H."/>
            <person name="Lyne R."/>
            <person name="Stewart A."/>
            <person name="Sgouros J.G."/>
            <person name="Peat N."/>
            <person name="Hayles J."/>
            <person name="Baker S.G."/>
            <person name="Basham D."/>
            <person name="Bowman S."/>
            <person name="Brooks K."/>
            <person name="Brown D."/>
            <person name="Brown S."/>
            <person name="Chillingworth T."/>
            <person name="Churcher C.M."/>
            <person name="Collins M."/>
            <person name="Connor R."/>
            <person name="Cronin A."/>
            <person name="Davis P."/>
            <person name="Feltwell T."/>
            <person name="Fraser A."/>
            <person name="Gentles S."/>
            <person name="Goble A."/>
            <person name="Hamlin N."/>
            <person name="Harris D.E."/>
            <person name="Hidalgo J."/>
            <person name="Hodgson G."/>
            <person name="Holroyd S."/>
            <person name="Hornsby T."/>
            <person name="Howarth S."/>
            <person name="Huckle E.J."/>
            <person name="Hunt S."/>
            <person name="Jagels K."/>
            <person name="James K.D."/>
            <person name="Jones L."/>
            <person name="Jones M."/>
            <person name="Leather S."/>
            <person name="McDonald S."/>
            <person name="McLean J."/>
            <person name="Mooney P."/>
            <person name="Moule S."/>
            <person name="Mungall K.L."/>
            <person name="Murphy L.D."/>
            <person name="Niblett D."/>
            <person name="Odell C."/>
            <person name="Oliver K."/>
            <person name="O'Neil S."/>
            <person name="Pearson D."/>
            <person name="Quail M.A."/>
            <person name="Rabbinowitsch E."/>
            <person name="Rutherford K.M."/>
            <person name="Rutter S."/>
            <person name="Saunders D."/>
            <person name="Seeger K."/>
            <person name="Sharp S."/>
            <person name="Skelton J."/>
            <person name="Simmonds M.N."/>
            <person name="Squares R."/>
            <person name="Squares S."/>
            <person name="Stevens K."/>
            <person name="Taylor K."/>
            <person name="Taylor R.G."/>
            <person name="Tivey A."/>
            <person name="Walsh S.V."/>
            <person name="Warren T."/>
            <person name="Whitehead S."/>
            <person name="Woodward J.R."/>
            <person name="Volckaert G."/>
            <person name="Aert R."/>
            <person name="Robben J."/>
            <person name="Grymonprez B."/>
            <person name="Weltjens I."/>
            <person name="Vanstreels E."/>
            <person name="Rieger M."/>
            <person name="Schaefer M."/>
            <person name="Mueller-Auer S."/>
            <person name="Gabel C."/>
            <person name="Fuchs M."/>
            <person name="Duesterhoeft A."/>
            <person name="Fritzc C."/>
            <person name="Holzer E."/>
            <person name="Moestl D."/>
            <person name="Hilbert H."/>
            <person name="Borzym K."/>
            <person name="Langer I."/>
            <person name="Beck A."/>
            <person name="Lehrach H."/>
            <person name="Reinhardt R."/>
            <person name="Pohl T.M."/>
            <person name="Eger P."/>
            <person name="Zimmermann W."/>
            <person name="Wedler H."/>
            <person name="Wambutt R."/>
            <person name="Purnelle B."/>
            <person name="Goffeau A."/>
            <person name="Cadieu E."/>
            <person name="Dreano S."/>
            <person name="Gloux S."/>
            <person name="Lelaure V."/>
            <person name="Mottier S."/>
            <person name="Galibert F."/>
            <person name="Aves S.J."/>
            <person name="Xiang Z."/>
            <person name="Hunt C."/>
            <person name="Moore K."/>
            <person name="Hurst S.M."/>
            <person name="Lucas M."/>
            <person name="Rochet M."/>
            <person name="Gaillardin C."/>
            <person name="Tallada V.A."/>
            <person name="Garzon A."/>
            <person name="Thode G."/>
            <person name="Daga R.R."/>
            <person name="Cruzado L."/>
            <person name="Jimenez J."/>
            <person name="Sanchez M."/>
            <person name="del Rey F."/>
            <person name="Benito J."/>
            <person name="Dominguez A."/>
            <person name="Revuelta J.L."/>
            <person name="Moreno S."/>
            <person name="Armstrong J."/>
            <person name="Forsburg S.L."/>
            <person name="Cerutti L."/>
            <person name="Lowe T."/>
            <person name="McCombie W.R."/>
            <person name="Paulsen I."/>
            <person name="Potashkin J."/>
            <person name="Shpakovski G.V."/>
            <person name="Ussery D."/>
            <person name="Barrell B.G."/>
            <person name="Nurse P."/>
        </authorList>
    </citation>
    <scope>NUCLEOTIDE SEQUENCE [LARGE SCALE GENOMIC DNA]</scope>
    <source>
        <strain>972 / ATCC 24843</strain>
    </source>
</reference>
<gene>
    <name type="ORF">SPCC830.09c</name>
</gene>
<name>POP5_SCHPO</name>
<keyword id="KW-0378">Hydrolase</keyword>
<keyword id="KW-0539">Nucleus</keyword>
<keyword id="KW-1185">Reference proteome</keyword>
<keyword id="KW-0819">tRNA processing</keyword>
<protein>
    <recommendedName>
        <fullName>Ribonuclease P/MRP protein subunit POP5</fullName>
        <ecNumber>3.1.26.5</ecNumber>
    </recommendedName>
</protein>